<name>GEL2_ASPFC</name>
<organism>
    <name type="scientific">Aspergillus fumigatus (strain CBS 144.89 / FGSC A1163 / CEA10)</name>
    <name type="common">Neosartorya fumigata</name>
    <dbReference type="NCBI Taxonomy" id="451804"/>
    <lineage>
        <taxon>Eukaryota</taxon>
        <taxon>Fungi</taxon>
        <taxon>Dikarya</taxon>
        <taxon>Ascomycota</taxon>
        <taxon>Pezizomycotina</taxon>
        <taxon>Eurotiomycetes</taxon>
        <taxon>Eurotiomycetidae</taxon>
        <taxon>Eurotiales</taxon>
        <taxon>Aspergillaceae</taxon>
        <taxon>Aspergillus</taxon>
        <taxon>Aspergillus subgen. Fumigati</taxon>
    </lineage>
</organism>
<comment type="function">
    <text evidence="1">Splits internally a 1,3-beta-glucan molecule and transfers the newly generated reducing end (the donor) to the non-reducing end of another 1,3-beta-glucan molecule (the acceptor) forming a 1,3-beta linkage, resulting in the elongation of 1,3-beta-glucan chains in the cell wall. Involved in cell wall morphogenesis (By similarity).</text>
</comment>
<comment type="subcellular location">
    <subcellularLocation>
        <location evidence="5">Cell membrane</location>
        <topology evidence="5">Lipid-anchor</topology>
        <topology evidence="5">GPI-anchor</topology>
    </subcellularLocation>
</comment>
<comment type="PTM">
    <text>The GPI-like anchor contains a phosphoceramide lipid group.</text>
</comment>
<comment type="similarity">
    <text evidence="5">Belongs to the glycosyl hydrolase 72 family.</text>
</comment>
<sequence length="475" mass="51718">MLPTYVRLFTAVCALATTASAVVPIEVKGKDFVNSKTGDRFQILGVDYQPGGSSGFTKDKDPLSDPDACLRDAALMQRLGVNTIRIYNLSPSLNHDECASIFNAAGIYMILDVNSPLYGGYLDRTDPESTYNDVYFKQVFGVIEAFKNFPNTLAFFAGNEVINEQSVKNVPTYVRAIQRDMKDYIAKNLDRSIPVGYSAADIRPILMDTLNYFMCADDANSQSDFFGLNSYSWCGNSSYTKSGYDVLTKDFADASIPVFFSEYGCNEVQPRYFSEVQALYGQEMTQSFSGGLVYEYTQEENDYGLVQINDNGTVTLLVDYDNLMAQYSKLDMSRIQASNTTQTSAKPPKCESSLITNSTFTDSFDLPKRPSKVQTMIDKGLSDANTGKLVEVKNTDIKQKIYNANGEEITGIKLSILASGESNTPGAHSSGSTSGSSSSGGSSSSSSDKESAAGTISVPFVGLLSAASFMAFFML</sequence>
<accession>B0Y8H9</accession>
<accession>Q4WM30</accession>
<accession>Q9P8U4</accession>
<dbReference type="EC" id="2.4.1.-"/>
<dbReference type="EMBL" id="AF208039">
    <property type="protein sequence ID" value="AAF40139.1"/>
    <property type="molecule type" value="Genomic_DNA"/>
</dbReference>
<dbReference type="EMBL" id="DS499599">
    <property type="protein sequence ID" value="EDP49710.1"/>
    <property type="molecule type" value="Genomic_DNA"/>
</dbReference>
<dbReference type="SMR" id="B0Y8H9"/>
<dbReference type="Allergome" id="8986">
    <property type="allergen name" value="Asp f GT"/>
</dbReference>
<dbReference type="GlyCosmos" id="B0Y8H9">
    <property type="glycosylation" value="4 sites, No reported glycans"/>
</dbReference>
<dbReference type="EnsemblFungi" id="EDP49710">
    <property type="protein sequence ID" value="EDP49710"/>
    <property type="gene ID" value="AFUB_077400"/>
</dbReference>
<dbReference type="VEuPathDB" id="FungiDB:AFUB_077400"/>
<dbReference type="HOGENOM" id="CLU_021855_1_2_1"/>
<dbReference type="OrthoDB" id="119999at5052"/>
<dbReference type="PhylomeDB" id="B0Y8H9"/>
<dbReference type="Proteomes" id="UP000001699">
    <property type="component" value="Unassembled WGS sequence"/>
</dbReference>
<dbReference type="GO" id="GO:0009277">
    <property type="term" value="C:fungal-type cell wall"/>
    <property type="evidence" value="ECO:0007669"/>
    <property type="project" value="EnsemblFungi"/>
</dbReference>
<dbReference type="GO" id="GO:0005886">
    <property type="term" value="C:plasma membrane"/>
    <property type="evidence" value="ECO:0007669"/>
    <property type="project" value="UniProtKB-SubCell"/>
</dbReference>
<dbReference type="GO" id="GO:0098552">
    <property type="term" value="C:side of membrane"/>
    <property type="evidence" value="ECO:0007669"/>
    <property type="project" value="UniProtKB-KW"/>
</dbReference>
<dbReference type="GO" id="GO:0042124">
    <property type="term" value="F:1,3-beta-glucanosyltransferase activity"/>
    <property type="evidence" value="ECO:0007669"/>
    <property type="project" value="TreeGrafter"/>
</dbReference>
<dbReference type="GO" id="GO:0071970">
    <property type="term" value="P:fungal-type cell wall (1-&gt;3)-beta-D-glucan biosynthetic process"/>
    <property type="evidence" value="ECO:0007669"/>
    <property type="project" value="TreeGrafter"/>
</dbReference>
<dbReference type="GO" id="GO:0031505">
    <property type="term" value="P:fungal-type cell wall organization"/>
    <property type="evidence" value="ECO:0007669"/>
    <property type="project" value="TreeGrafter"/>
</dbReference>
<dbReference type="FunFam" id="3.20.20.80:FF:000032">
    <property type="entry name" value="1,3-beta-glucanosyltransferase"/>
    <property type="match status" value="1"/>
</dbReference>
<dbReference type="Gene3D" id="3.20.20.80">
    <property type="entry name" value="Glycosidases"/>
    <property type="match status" value="1"/>
</dbReference>
<dbReference type="InterPro" id="IPR004886">
    <property type="entry name" value="Glucanosyltransferase"/>
</dbReference>
<dbReference type="InterPro" id="IPR017853">
    <property type="entry name" value="Glycoside_hydrolase_SF"/>
</dbReference>
<dbReference type="PANTHER" id="PTHR31468">
    <property type="entry name" value="1,3-BETA-GLUCANOSYLTRANSFERASE GAS1"/>
    <property type="match status" value="1"/>
</dbReference>
<dbReference type="PANTHER" id="PTHR31468:SF4">
    <property type="entry name" value="1,3-BETA-GLUCANOSYLTRANSFERASE GAS3-RELATED"/>
    <property type="match status" value="1"/>
</dbReference>
<dbReference type="Pfam" id="PF03198">
    <property type="entry name" value="Glyco_hydro_72"/>
    <property type="match status" value="1"/>
</dbReference>
<dbReference type="SUPFAM" id="SSF51445">
    <property type="entry name" value="(Trans)glycosidases"/>
    <property type="match status" value="1"/>
</dbReference>
<reference key="1">
    <citation type="journal article" date="2000" name="Biochem. J.">
        <title>Identification of the catalytic residues of the first family of beta(1-3)glucanosyltransferases identified in fungi.</title>
        <authorList>
            <person name="Mouyna I."/>
            <person name="Monod M."/>
            <person name="Fontaine T."/>
            <person name="Henrissat B."/>
            <person name="Lechenne B."/>
            <person name="Latge J.-P."/>
        </authorList>
    </citation>
    <scope>NUCLEOTIDE SEQUENCE [GENOMIC DNA]</scope>
</reference>
<reference key="2">
    <citation type="journal article" date="2008" name="PLoS Genet.">
        <title>Genomic islands in the pathogenic filamentous fungus Aspergillus fumigatus.</title>
        <authorList>
            <person name="Fedorova N.D."/>
            <person name="Khaldi N."/>
            <person name="Joardar V.S."/>
            <person name="Maiti R."/>
            <person name="Amedeo P."/>
            <person name="Anderson M.J."/>
            <person name="Crabtree J."/>
            <person name="Silva J.C."/>
            <person name="Badger J.H."/>
            <person name="Albarraq A."/>
            <person name="Angiuoli S."/>
            <person name="Bussey H."/>
            <person name="Bowyer P."/>
            <person name="Cotty P.J."/>
            <person name="Dyer P.S."/>
            <person name="Egan A."/>
            <person name="Galens K."/>
            <person name="Fraser-Liggett C.M."/>
            <person name="Haas B.J."/>
            <person name="Inman J.M."/>
            <person name="Kent R."/>
            <person name="Lemieux S."/>
            <person name="Malavazi I."/>
            <person name="Orvis J."/>
            <person name="Roemer T."/>
            <person name="Ronning C.M."/>
            <person name="Sundaram J.P."/>
            <person name="Sutton G."/>
            <person name="Turner G."/>
            <person name="Venter J.C."/>
            <person name="White O.R."/>
            <person name="Whitty B.R."/>
            <person name="Youngman P."/>
            <person name="Wolfe K.H."/>
            <person name="Goldman G.H."/>
            <person name="Wortman J.R."/>
            <person name="Jiang B."/>
            <person name="Denning D.W."/>
            <person name="Nierman W.C."/>
        </authorList>
    </citation>
    <scope>NUCLEOTIDE SEQUENCE [LARGE SCALE GENOMIC DNA]</scope>
    <source>
        <strain>CBS 144.89 / FGSC A1163 / CEA10</strain>
    </source>
</reference>
<reference key="3">
    <citation type="journal article" date="2003" name="Glycobiology">
        <title>Structures of the glycosylphosphatidylinositol membrane anchors from Aspergillus fumigatus membrane proteins.</title>
        <authorList>
            <person name="Fontaine T."/>
            <person name="Magnin T."/>
            <person name="Melhert A."/>
            <person name="Lamont D."/>
            <person name="Latge J.-P."/>
            <person name="Ferguson M.A.J."/>
        </authorList>
    </citation>
    <scope>STRUCTURE OF GPI-ANCHOR</scope>
</reference>
<feature type="signal peptide" evidence="3">
    <location>
        <begin position="1"/>
        <end position="21"/>
    </location>
</feature>
<feature type="chain" id="PRO_0000372605" description="1,3-beta-glucanosyltransferase gel2">
    <location>
        <begin position="22"/>
        <end position="451"/>
    </location>
</feature>
<feature type="propeptide" id="PRO_0000372606" description="Removed in mature form" evidence="3">
    <location>
        <begin position="452"/>
        <end position="475"/>
    </location>
</feature>
<feature type="region of interest" description="Disordered" evidence="4">
    <location>
        <begin position="420"/>
        <end position="451"/>
    </location>
</feature>
<feature type="compositionally biased region" description="Low complexity" evidence="4">
    <location>
        <begin position="429"/>
        <end position="446"/>
    </location>
</feature>
<feature type="active site" description="Proton donor" evidence="1">
    <location>
        <position position="160"/>
    </location>
</feature>
<feature type="active site" description="Nucleophile" evidence="1">
    <location>
        <position position="262"/>
    </location>
</feature>
<feature type="binding site" evidence="2">
    <location>
        <position position="87"/>
    </location>
    <ligand>
        <name>(1,3-beta-D-glucosyl)n</name>
        <dbReference type="ChEBI" id="CHEBI:37671"/>
        <label>1</label>
        <note>donor substrate</note>
    </ligand>
</feature>
<feature type="binding site" evidence="2">
    <location>
        <position position="159"/>
    </location>
    <ligand>
        <name>(1,3-beta-D-glucosyl)n</name>
        <dbReference type="ChEBI" id="CHEBI:37671"/>
        <label>1</label>
        <note>donor substrate</note>
    </ligand>
</feature>
<feature type="binding site" evidence="2">
    <location>
        <position position="160"/>
    </location>
    <ligand>
        <name>(1,3-beta-D-glucosyl)n</name>
        <dbReference type="ChEBI" id="CHEBI:37671"/>
        <label>2</label>
        <note>acceptor substrate</note>
    </ligand>
</feature>
<feature type="binding site" evidence="2">
    <location>
        <position position="201"/>
    </location>
    <ligand>
        <name>(1,3-beta-D-glucosyl)n</name>
        <dbReference type="ChEBI" id="CHEBI:37671"/>
        <label>2</label>
        <note>acceptor substrate</note>
    </ligand>
</feature>
<feature type="binding site" evidence="2">
    <location>
        <position position="294"/>
    </location>
    <ligand>
        <name>(1,3-beta-D-glucosyl)n</name>
        <dbReference type="ChEBI" id="CHEBI:37671"/>
        <label>1</label>
        <note>donor substrate</note>
    </ligand>
</feature>
<feature type="lipid moiety-binding region" description="GPI-like-anchor amidated serine" evidence="3">
    <location>
        <position position="451"/>
    </location>
</feature>
<feature type="glycosylation site" description="N-linked (GlcNAc...) asparagine" evidence="3">
    <location>
        <position position="236"/>
    </location>
</feature>
<feature type="glycosylation site" description="N-linked (GlcNAc...) asparagine" evidence="3">
    <location>
        <position position="311"/>
    </location>
</feature>
<feature type="glycosylation site" description="N-linked (GlcNAc...) asparagine" evidence="3">
    <location>
        <position position="339"/>
    </location>
</feature>
<feature type="glycosylation site" description="N-linked (GlcNAc...) asparagine" evidence="3">
    <location>
        <position position="357"/>
    </location>
</feature>
<feature type="disulfide bond" evidence="2">
    <location>
        <begin position="69"/>
        <end position="98"/>
    </location>
</feature>
<feature type="disulfide bond" evidence="2">
    <location>
        <begin position="215"/>
        <end position="350"/>
    </location>
</feature>
<feature type="disulfide bond" evidence="2">
    <location>
        <begin position="234"/>
        <end position="265"/>
    </location>
</feature>
<proteinExistence type="evidence at protein level"/>
<gene>
    <name type="primary">gel2</name>
    <name type="ORF">AFUB_077400</name>
</gene>
<evidence type="ECO:0000250" key="1"/>
<evidence type="ECO:0000250" key="2">
    <source>
        <dbReference type="UniProtKB" id="Q06135"/>
    </source>
</evidence>
<evidence type="ECO:0000255" key="3"/>
<evidence type="ECO:0000256" key="4">
    <source>
        <dbReference type="SAM" id="MobiDB-lite"/>
    </source>
</evidence>
<evidence type="ECO:0000305" key="5"/>
<keyword id="KW-1003">Cell membrane</keyword>
<keyword id="KW-1015">Disulfide bond</keyword>
<keyword id="KW-0325">Glycoprotein</keyword>
<keyword id="KW-0336">GPI-anchor</keyword>
<keyword id="KW-0449">Lipoprotein</keyword>
<keyword id="KW-0472">Membrane</keyword>
<keyword id="KW-0732">Signal</keyword>
<keyword id="KW-0808">Transferase</keyword>
<protein>
    <recommendedName>
        <fullName>1,3-beta-glucanosyltransferase gel2</fullName>
        <ecNumber>2.4.1.-</ecNumber>
    </recommendedName>
    <alternativeName>
        <fullName>Glucan elongating glucanosyltransferase 2</fullName>
    </alternativeName>
</protein>